<organism>
    <name type="scientific">Human cytomegalovirus (strain Merlin)</name>
    <name type="common">HHV-5</name>
    <name type="synonym">Human herpesvirus 5</name>
    <dbReference type="NCBI Taxonomy" id="295027"/>
    <lineage>
        <taxon>Viruses</taxon>
        <taxon>Duplodnaviria</taxon>
        <taxon>Heunggongvirae</taxon>
        <taxon>Peploviricota</taxon>
        <taxon>Herviviricetes</taxon>
        <taxon>Herpesvirales</taxon>
        <taxon>Orthoherpesviridae</taxon>
        <taxon>Betaherpesvirinae</taxon>
        <taxon>Cytomegalovirus</taxon>
        <taxon>Cytomegalovirus humanbeta5</taxon>
        <taxon>Human cytomegalovirus</taxon>
    </lineage>
</organism>
<gene>
    <name type="primary">UL135</name>
</gene>
<evidence type="ECO:0000255" key="1"/>
<evidence type="ECO:0000256" key="2">
    <source>
        <dbReference type="SAM" id="MobiDB-lite"/>
    </source>
</evidence>
<evidence type="ECO:0000269" key="3">
    <source>
    </source>
</evidence>
<evidence type="ECO:0000305" key="4"/>
<sequence length="308" mass="33281">MVWLWLGVGLLGGTGLASLVLAISLFTQRRGRKRSDETSSRGRLPGAASDKRGACACCYRIPKEDVVEPLDLELGLMRVATHPPTPQVPRCTSLYIGEDGLPIDKPEFPPARFEIPDVSTPGTPTSIGRSPSHCSSSSSLSSSASVDTVLHQPPPSWKPPPPPGRKKRPPTPPVRAPTTRLSSHRPPTPIPAPRKNLSTPPTKKTPPPTKPKPVGWTPPVTPRPFPKTPTPQKPPRNPRLPRTVGLENLSKVGLSCPCPRPRTPTEPTTLPIVSVSELAPPPRWSDIEELLEKAVQSVMKDAESMQMT</sequence>
<proteinExistence type="evidence at protein level"/>
<protein>
    <recommendedName>
        <fullName>Protein UL135</fullName>
    </recommendedName>
</protein>
<keyword id="KW-1032">Host cell membrane</keyword>
<keyword id="KW-1040">Host Golgi apparatus</keyword>
<keyword id="KW-1043">Host membrane</keyword>
<keyword id="KW-0945">Host-virus interaction</keyword>
<keyword id="KW-0472">Membrane</keyword>
<keyword id="KW-1131">Modulation of host NK-cell activity by virus</keyword>
<keyword id="KW-1185">Reference proteome</keyword>
<keyword id="KW-0732">Signal</keyword>
<keyword id="KW-0899">Viral immunoevasion</keyword>
<organismHost>
    <name type="scientific">Homo sapiens</name>
    <name type="common">Human</name>
    <dbReference type="NCBI Taxonomy" id="9606"/>
</organismHost>
<name>UL135_HCMVM</name>
<accession>F5HAQ7</accession>
<comment type="function">
    <text evidence="3">Remodels the host actin cytoskeleton in order to impair immune recognition of infected cells. Mechanistically, interacts with members of the host WAVE2 complex and redirects the complex to the plasma membrane. In turn, the efficiency of immune synapse formation is greatly reduced.</text>
</comment>
<comment type="subunit">
    <text evidence="3">Interacts with host components of the WAVE2 complex ABI1, NAP1 and WAVE2. Also interacts with host ABI2 and TLN1.</text>
</comment>
<comment type="subcellular location">
    <subcellularLocation>
        <location evidence="3">Host cell membrane</location>
    </subcellularLocation>
    <subcellularLocation>
        <location evidence="3">Host Golgi apparatus</location>
    </subcellularLocation>
</comment>
<comment type="similarity">
    <text evidence="4">Belongs to the HCMV UL135 family.</text>
</comment>
<feature type="signal peptide" evidence="1">
    <location>
        <begin position="1"/>
        <end position="22"/>
    </location>
</feature>
<feature type="chain" id="PRO_0000416731" description="Protein UL135">
    <location>
        <begin position="23"/>
        <end position="308"/>
    </location>
</feature>
<feature type="region of interest" description="Disordered" evidence="2">
    <location>
        <begin position="105"/>
        <end position="274"/>
    </location>
</feature>
<feature type="compositionally biased region" description="Low complexity" evidence="2">
    <location>
        <begin position="126"/>
        <end position="145"/>
    </location>
</feature>
<feature type="compositionally biased region" description="Pro residues" evidence="2">
    <location>
        <begin position="152"/>
        <end position="163"/>
    </location>
</feature>
<feature type="compositionally biased region" description="Pro residues" evidence="2">
    <location>
        <begin position="219"/>
        <end position="238"/>
    </location>
</feature>
<dbReference type="EMBL" id="AY446894">
    <property type="protein sequence ID" value="AAR31684.1"/>
    <property type="molecule type" value="Genomic_DNA"/>
</dbReference>
<dbReference type="RefSeq" id="YP_081580.1">
    <property type="nucleotide sequence ID" value="NC_006273.2"/>
</dbReference>
<dbReference type="SMR" id="F5HAQ7"/>
<dbReference type="BioGRID" id="1678011">
    <property type="interactions" value="21"/>
</dbReference>
<dbReference type="DNASU" id="3077458"/>
<dbReference type="GeneID" id="3077458"/>
<dbReference type="KEGG" id="vg:3077458"/>
<dbReference type="Proteomes" id="UP000000938">
    <property type="component" value="Segment"/>
</dbReference>
<dbReference type="GO" id="GO:0044177">
    <property type="term" value="C:host cell Golgi apparatus"/>
    <property type="evidence" value="ECO:0007669"/>
    <property type="project" value="UniProtKB-SubCell"/>
</dbReference>
<dbReference type="GO" id="GO:0020002">
    <property type="term" value="C:host cell plasma membrane"/>
    <property type="evidence" value="ECO:0007669"/>
    <property type="project" value="UniProtKB-SubCell"/>
</dbReference>
<dbReference type="GO" id="GO:0016020">
    <property type="term" value="C:membrane"/>
    <property type="evidence" value="ECO:0007669"/>
    <property type="project" value="UniProtKB-KW"/>
</dbReference>
<dbReference type="GO" id="GO:0039671">
    <property type="term" value="P:symbiont-mediated perturbation of host natural killer cell mediated immune response"/>
    <property type="evidence" value="ECO:0007669"/>
    <property type="project" value="UniProtKB-KW"/>
</dbReference>
<reference key="1">
    <citation type="journal article" date="2004" name="J. Gen. Virol.">
        <title>Genetic content of wild-type human cytomegalovirus.</title>
        <authorList>
            <person name="Dolan A."/>
            <person name="Cunningham C."/>
            <person name="Hector R.D."/>
            <person name="Hassan-Walker A.F."/>
            <person name="Lee L."/>
            <person name="Addison C."/>
            <person name="Dargan D.J."/>
            <person name="McGeoch D.J."/>
            <person name="Gatherer D."/>
            <person name="Emery V.C."/>
            <person name="Griffiths P.D."/>
            <person name="Sinzger C."/>
            <person name="McSharry B.P."/>
            <person name="Wilkinson G.W.G."/>
            <person name="Davison A.J."/>
        </authorList>
    </citation>
    <scope>NUCLEOTIDE SEQUENCE [LARGE SCALE GENOMIC DNA]</scope>
</reference>
<reference key="2">
    <citation type="journal article" date="2014" name="Cell Host Microbe">
        <title>HCMV pUL135 remodels the actin cytoskeleton to impair immune recognition of infected cells.</title>
        <authorList>
            <person name="Stanton R.J."/>
            <person name="Prod'homme V."/>
            <person name="Purbhoo M.A."/>
            <person name="Moore M."/>
            <person name="Aicheler R.J."/>
            <person name="Heinzmann M."/>
            <person name="Bailer S.M."/>
            <person name="Haas J."/>
            <person name="Antrobus R."/>
            <person name="Weekes M.P."/>
            <person name="Lehner P.J."/>
            <person name="Vojtesek B."/>
            <person name="Miners K.L."/>
            <person name="Man S."/>
            <person name="Wilkie G.S."/>
            <person name="Davison A.J."/>
            <person name="Wang E.C."/>
            <person name="Tomasec P."/>
            <person name="Wilkinson G.W."/>
        </authorList>
    </citation>
    <scope>FUNCTION</scope>
    <scope>SUBCELLULAR LOCATION</scope>
    <scope>INTERACTION WITH HOST ABI1; ABI2; NAP1; WASF2 AND TLN1</scope>
</reference>